<feature type="chain" id="PRO_0000098982" description="Tryptophan synthase beta chain">
    <location>
        <begin position="1"/>
        <end position="405"/>
    </location>
</feature>
<feature type="modified residue" description="N6-(pyridoxal phosphate)lysine" evidence="1">
    <location>
        <position position="95"/>
    </location>
</feature>
<gene>
    <name type="primary">trpB</name>
</gene>
<proteinExistence type="inferred from homology"/>
<evidence type="ECO:0000250" key="1"/>
<evidence type="ECO:0000305" key="2"/>
<organism>
    <name type="scientific">Pseudomonas putida</name>
    <name type="common">Arthrobacter siderocapsulatus</name>
    <dbReference type="NCBI Taxonomy" id="303"/>
    <lineage>
        <taxon>Bacteria</taxon>
        <taxon>Pseudomonadati</taxon>
        <taxon>Pseudomonadota</taxon>
        <taxon>Gammaproteobacteria</taxon>
        <taxon>Pseudomonadales</taxon>
        <taxon>Pseudomonadaceae</taxon>
        <taxon>Pseudomonas</taxon>
    </lineage>
</organism>
<sequence>MTQSQYRPGPDANGLFGSFGGRYVAETLMPLVLDLAREYEAAKADPKFLEELAYFQRDYIGRPNPLYFAERLTEHCGGAKIFFKREELNHTGAHKVNNCIGQVLLAKRMGKKRLIAETGAGMHGVATATVAARFGLPCVIYMGATDIERQQANVFRMKLLGAEIVPVTAGTGTLKDAMNEALRDWVTNVEDTFYLIGTVAGPHPYPAMVRDFQSIIGKETRAQLQEKEGRLPDSLVACVGGGSNAMGLFHEFLEEPSVQIIGVEAGGHGVHTDKHAASLNGGVPGVLHGNRTYLLQDEDGQITDAHSISAGLDYPGIGPEHAYLHEVKRVEYVSITDDEALDAFHATCRLEGIIPALESSHALAEAIKRAPKLPKDHLMVVCLSGRGDKDMQTVMNHMAAQEKQA</sequence>
<accession>P11080</accession>
<dbReference type="EC" id="4.2.1.20"/>
<dbReference type="EMBL" id="X13299">
    <property type="protein sequence ID" value="CAA31661.1"/>
    <property type="molecule type" value="Genomic_DNA"/>
</dbReference>
<dbReference type="PIR" id="S03835">
    <property type="entry name" value="B30768"/>
</dbReference>
<dbReference type="RefSeq" id="WP_015268451.1">
    <property type="nucleotide sequence ID" value="NZ_RJAI01000071.1"/>
</dbReference>
<dbReference type="SMR" id="P11080"/>
<dbReference type="GeneID" id="97165573"/>
<dbReference type="eggNOG" id="COG0133">
    <property type="taxonomic scope" value="Bacteria"/>
</dbReference>
<dbReference type="OrthoDB" id="9766131at2"/>
<dbReference type="UniPathway" id="UPA00035">
    <property type="reaction ID" value="UER00044"/>
</dbReference>
<dbReference type="GO" id="GO:0005737">
    <property type="term" value="C:cytoplasm"/>
    <property type="evidence" value="ECO:0007669"/>
    <property type="project" value="TreeGrafter"/>
</dbReference>
<dbReference type="GO" id="GO:0004834">
    <property type="term" value="F:tryptophan synthase activity"/>
    <property type="evidence" value="ECO:0007669"/>
    <property type="project" value="UniProtKB-UniRule"/>
</dbReference>
<dbReference type="CDD" id="cd06446">
    <property type="entry name" value="Trp-synth_B"/>
    <property type="match status" value="1"/>
</dbReference>
<dbReference type="FunFam" id="3.40.50.1100:FF:000001">
    <property type="entry name" value="Tryptophan synthase beta chain"/>
    <property type="match status" value="1"/>
</dbReference>
<dbReference type="FunFam" id="3.40.50.1100:FF:000004">
    <property type="entry name" value="Tryptophan synthase beta chain"/>
    <property type="match status" value="1"/>
</dbReference>
<dbReference type="Gene3D" id="3.40.50.1100">
    <property type="match status" value="2"/>
</dbReference>
<dbReference type="HAMAP" id="MF_00133">
    <property type="entry name" value="Trp_synth_beta"/>
    <property type="match status" value="1"/>
</dbReference>
<dbReference type="InterPro" id="IPR006653">
    <property type="entry name" value="Trp_synth_b_CS"/>
</dbReference>
<dbReference type="InterPro" id="IPR006654">
    <property type="entry name" value="Trp_synth_beta"/>
</dbReference>
<dbReference type="InterPro" id="IPR023026">
    <property type="entry name" value="Trp_synth_beta/beta-like"/>
</dbReference>
<dbReference type="InterPro" id="IPR001926">
    <property type="entry name" value="TrpB-like_PALP"/>
</dbReference>
<dbReference type="InterPro" id="IPR036052">
    <property type="entry name" value="TrpB-like_PALP_sf"/>
</dbReference>
<dbReference type="NCBIfam" id="TIGR00263">
    <property type="entry name" value="trpB"/>
    <property type="match status" value="1"/>
</dbReference>
<dbReference type="PANTHER" id="PTHR48077:SF3">
    <property type="entry name" value="TRYPTOPHAN SYNTHASE"/>
    <property type="match status" value="1"/>
</dbReference>
<dbReference type="PANTHER" id="PTHR48077">
    <property type="entry name" value="TRYPTOPHAN SYNTHASE-RELATED"/>
    <property type="match status" value="1"/>
</dbReference>
<dbReference type="Pfam" id="PF00291">
    <property type="entry name" value="PALP"/>
    <property type="match status" value="1"/>
</dbReference>
<dbReference type="PIRSF" id="PIRSF001413">
    <property type="entry name" value="Trp_syn_beta"/>
    <property type="match status" value="1"/>
</dbReference>
<dbReference type="SUPFAM" id="SSF53686">
    <property type="entry name" value="Tryptophan synthase beta subunit-like PLP-dependent enzymes"/>
    <property type="match status" value="1"/>
</dbReference>
<dbReference type="PROSITE" id="PS00168">
    <property type="entry name" value="TRP_SYNTHASE_BETA"/>
    <property type="match status" value="1"/>
</dbReference>
<comment type="function">
    <text evidence="1">The beta subunit is responsible for the synthesis of L-tryptophan from indole and L-serine.</text>
</comment>
<comment type="catalytic activity">
    <reaction>
        <text>(1S,2R)-1-C-(indol-3-yl)glycerol 3-phosphate + L-serine = D-glyceraldehyde 3-phosphate + L-tryptophan + H2O</text>
        <dbReference type="Rhea" id="RHEA:10532"/>
        <dbReference type="ChEBI" id="CHEBI:15377"/>
        <dbReference type="ChEBI" id="CHEBI:33384"/>
        <dbReference type="ChEBI" id="CHEBI:57912"/>
        <dbReference type="ChEBI" id="CHEBI:58866"/>
        <dbReference type="ChEBI" id="CHEBI:59776"/>
        <dbReference type="EC" id="4.2.1.20"/>
    </reaction>
</comment>
<comment type="cofactor">
    <cofactor evidence="1">
        <name>pyridoxal 5'-phosphate</name>
        <dbReference type="ChEBI" id="CHEBI:597326"/>
    </cofactor>
</comment>
<comment type="pathway">
    <text>Amino-acid biosynthesis; L-tryptophan biosynthesis; L-tryptophan from chorismate: step 5/5.</text>
</comment>
<comment type="subunit">
    <text evidence="1">Tetramer of two alpha and two beta chains.</text>
</comment>
<comment type="similarity">
    <text evidence="2">Belongs to the TrpB family.</text>
</comment>
<name>TRPB_PSEPU</name>
<reference key="1">
    <citation type="journal article" date="1989" name="Biochimie">
        <title>DNA sequence of the tryptophan synthase genes of Pseudomonas putida.</title>
        <authorList>
            <person name="Eberly L."/>
            <person name="Crawford I.P."/>
        </authorList>
    </citation>
    <scope>NUCLEOTIDE SEQUENCE [GENOMIC DNA]</scope>
    <source>
        <strain>PPG1 C1S</strain>
    </source>
</reference>
<keyword id="KW-0028">Amino-acid biosynthesis</keyword>
<keyword id="KW-0057">Aromatic amino acid biosynthesis</keyword>
<keyword id="KW-0456">Lyase</keyword>
<keyword id="KW-0663">Pyridoxal phosphate</keyword>
<keyword id="KW-0822">Tryptophan biosynthesis</keyword>
<protein>
    <recommendedName>
        <fullName>Tryptophan synthase beta chain</fullName>
        <ecNumber>4.2.1.20</ecNumber>
    </recommendedName>
</protein>